<dbReference type="EMBL" id="M57518">
    <property type="protein sequence ID" value="AAA27287.1"/>
    <property type="molecule type" value="Genomic_DNA"/>
</dbReference>
<dbReference type="EMBL" id="BA000022">
    <property type="protein sequence ID" value="BAA10059.1"/>
    <property type="molecule type" value="Genomic_DNA"/>
</dbReference>
<dbReference type="PIR" id="C39025">
    <property type="entry name" value="C39025"/>
</dbReference>
<dbReference type="SMR" id="P22358"/>
<dbReference type="FunCoup" id="P22358">
    <property type="interactions" value="458"/>
</dbReference>
<dbReference type="IntAct" id="P22358">
    <property type="interactions" value="1"/>
</dbReference>
<dbReference type="STRING" id="1148.gene:10499551"/>
<dbReference type="PaxDb" id="1148-1001435"/>
<dbReference type="EnsemblBacteria" id="BAA10059">
    <property type="protein sequence ID" value="BAA10059"/>
    <property type="gene ID" value="BAA10059"/>
</dbReference>
<dbReference type="KEGG" id="syn:sll0170"/>
<dbReference type="eggNOG" id="COG0443">
    <property type="taxonomic scope" value="Bacteria"/>
</dbReference>
<dbReference type="InParanoid" id="P22358"/>
<dbReference type="PhylomeDB" id="P22358"/>
<dbReference type="Proteomes" id="UP000001425">
    <property type="component" value="Chromosome"/>
</dbReference>
<dbReference type="GO" id="GO:0005524">
    <property type="term" value="F:ATP binding"/>
    <property type="evidence" value="ECO:0007669"/>
    <property type="project" value="UniProtKB-UniRule"/>
</dbReference>
<dbReference type="GO" id="GO:0016887">
    <property type="term" value="F:ATP hydrolysis activity"/>
    <property type="evidence" value="ECO:0000318"/>
    <property type="project" value="GO_Central"/>
</dbReference>
<dbReference type="GO" id="GO:0140662">
    <property type="term" value="F:ATP-dependent protein folding chaperone"/>
    <property type="evidence" value="ECO:0007669"/>
    <property type="project" value="InterPro"/>
</dbReference>
<dbReference type="GO" id="GO:0031072">
    <property type="term" value="F:heat shock protein binding"/>
    <property type="evidence" value="ECO:0000318"/>
    <property type="project" value="GO_Central"/>
</dbReference>
<dbReference type="GO" id="GO:0044183">
    <property type="term" value="F:protein folding chaperone"/>
    <property type="evidence" value="ECO:0000318"/>
    <property type="project" value="GO_Central"/>
</dbReference>
<dbReference type="GO" id="GO:0051082">
    <property type="term" value="F:unfolded protein binding"/>
    <property type="evidence" value="ECO:0007669"/>
    <property type="project" value="InterPro"/>
</dbReference>
<dbReference type="GO" id="GO:0051085">
    <property type="term" value="P:chaperone cofactor-dependent protein refolding"/>
    <property type="evidence" value="ECO:0000318"/>
    <property type="project" value="GO_Central"/>
</dbReference>
<dbReference type="GO" id="GO:0042026">
    <property type="term" value="P:protein refolding"/>
    <property type="evidence" value="ECO:0000318"/>
    <property type="project" value="GO_Central"/>
</dbReference>
<dbReference type="CDD" id="cd10234">
    <property type="entry name" value="ASKHA_NBD_HSP70_DnaK-like"/>
    <property type="match status" value="1"/>
</dbReference>
<dbReference type="FunFam" id="2.60.34.10:FF:000014">
    <property type="entry name" value="Chaperone protein DnaK HSP70"/>
    <property type="match status" value="1"/>
</dbReference>
<dbReference type="FunFam" id="1.20.1270.10:FF:000001">
    <property type="entry name" value="Molecular chaperone DnaK"/>
    <property type="match status" value="1"/>
</dbReference>
<dbReference type="FunFam" id="3.30.420.40:FF:000004">
    <property type="entry name" value="Molecular chaperone DnaK"/>
    <property type="match status" value="1"/>
</dbReference>
<dbReference type="FunFam" id="3.90.640.10:FF:000003">
    <property type="entry name" value="Molecular chaperone DnaK"/>
    <property type="match status" value="1"/>
</dbReference>
<dbReference type="Gene3D" id="1.20.1270.10">
    <property type="match status" value="1"/>
</dbReference>
<dbReference type="Gene3D" id="3.30.420.40">
    <property type="match status" value="2"/>
</dbReference>
<dbReference type="Gene3D" id="3.90.640.10">
    <property type="entry name" value="Actin, Chain A, domain 4"/>
    <property type="match status" value="1"/>
</dbReference>
<dbReference type="Gene3D" id="2.60.34.10">
    <property type="entry name" value="Substrate Binding Domain Of DNAk, Chain A, domain 1"/>
    <property type="match status" value="1"/>
</dbReference>
<dbReference type="HAMAP" id="MF_00332">
    <property type="entry name" value="DnaK"/>
    <property type="match status" value="1"/>
</dbReference>
<dbReference type="InterPro" id="IPR043129">
    <property type="entry name" value="ATPase_NBD"/>
</dbReference>
<dbReference type="InterPro" id="IPR012725">
    <property type="entry name" value="Chaperone_DnaK"/>
</dbReference>
<dbReference type="InterPro" id="IPR018181">
    <property type="entry name" value="Heat_shock_70_CS"/>
</dbReference>
<dbReference type="InterPro" id="IPR029048">
    <property type="entry name" value="HSP70_C_sf"/>
</dbReference>
<dbReference type="InterPro" id="IPR029047">
    <property type="entry name" value="HSP70_peptide-bd_sf"/>
</dbReference>
<dbReference type="InterPro" id="IPR013126">
    <property type="entry name" value="Hsp_70_fam"/>
</dbReference>
<dbReference type="NCBIfam" id="NF001413">
    <property type="entry name" value="PRK00290.1"/>
    <property type="match status" value="1"/>
</dbReference>
<dbReference type="NCBIfam" id="NF003520">
    <property type="entry name" value="PRK05183.1"/>
    <property type="match status" value="1"/>
</dbReference>
<dbReference type="NCBIfam" id="TIGR02350">
    <property type="entry name" value="prok_dnaK"/>
    <property type="match status" value="1"/>
</dbReference>
<dbReference type="PANTHER" id="PTHR19375">
    <property type="entry name" value="HEAT SHOCK PROTEIN 70KDA"/>
    <property type="match status" value="1"/>
</dbReference>
<dbReference type="Pfam" id="PF00012">
    <property type="entry name" value="HSP70"/>
    <property type="match status" value="1"/>
</dbReference>
<dbReference type="PRINTS" id="PR00301">
    <property type="entry name" value="HEATSHOCK70"/>
</dbReference>
<dbReference type="SUPFAM" id="SSF53067">
    <property type="entry name" value="Actin-like ATPase domain"/>
    <property type="match status" value="2"/>
</dbReference>
<dbReference type="SUPFAM" id="SSF100934">
    <property type="entry name" value="Heat shock protein 70kD (HSP70), C-terminal subdomain"/>
    <property type="match status" value="1"/>
</dbReference>
<dbReference type="SUPFAM" id="SSF100920">
    <property type="entry name" value="Heat shock protein 70kD (HSP70), peptide-binding domain"/>
    <property type="match status" value="1"/>
</dbReference>
<dbReference type="PROSITE" id="PS00297">
    <property type="entry name" value="HSP70_1"/>
    <property type="match status" value="1"/>
</dbReference>
<dbReference type="PROSITE" id="PS00329">
    <property type="entry name" value="HSP70_2"/>
    <property type="match status" value="1"/>
</dbReference>
<dbReference type="PROSITE" id="PS01036">
    <property type="entry name" value="HSP70_3"/>
    <property type="match status" value="1"/>
</dbReference>
<sequence length="636" mass="67614">MGKVVGIDLGTTNSCVAVMEGGKPTVIANAEGFRTTPSVVGYAKNGDRLVGQIAKRQAVMNPGNTFYSVKRFIGRKFDEITNEATEVAYSVVKDGNGNVKLDCPAQGKQFAPEEISAQVLRKLVDDASKYLGETVTQAVITVPAYFNDSQRQATKDAGKIAGIEVLRIINEPTAASLAYGLDKKDNETILVFDLGGGTFDVSILEVGEGVFEVLATSGDTHLGGDDFDKKIVDFLAGEFQKAEGIDLRKDKQALQRLTEAAEKAKIELSGVSQTEINLPFITATQDGPKHLDTTLSRAKFEEICSDLIDRCGIPVENAIRDAKIDKSALDEIVLVGGSTRIPAVQEVVKKILGKDPNQGVNPDEVVAVGAAIQGGVLSGEVKDILLLDVSPLSLGVETLGGVMTKIIPRNTTIPTKKSETFSTAVDGQSNVEIHVLQGEREMANDNKSLGTFRLDGIPPAPRGVPQIEVTFDIDANGILNVTAKDRGTGKEQSISITGASTLPDTEVDRMVKEAESNAAADKERREKIDRKNQADSLVYQAEKQITELGDKVPAADKIKAEGLIKDLKEAVAQEDDAKIQTVMPELQQVLYSIGSNMYQQAGAEAGVGAPGAGPEAGTSSGGGDDVIDAEFSEPEK</sequence>
<evidence type="ECO:0000250" key="1"/>
<evidence type="ECO:0000256" key="2">
    <source>
        <dbReference type="SAM" id="MobiDB-lite"/>
    </source>
</evidence>
<evidence type="ECO:0000269" key="3">
    <source>
    </source>
</evidence>
<evidence type="ECO:0000269" key="4">
    <source>
    </source>
</evidence>
<evidence type="ECO:0000269" key="5">
    <source>
    </source>
</evidence>
<evidence type="ECO:0000303" key="6">
    <source>
    </source>
</evidence>
<evidence type="ECO:0000305" key="7"/>
<gene>
    <name type="primary">dnaK2</name>
    <name evidence="6" type="synonym">dnaK</name>
    <name type="ordered locus">sll0170</name>
</gene>
<accession>P22358</accession>
<comment type="function">
    <text evidence="1">Acts as a chaperone.</text>
</comment>
<comment type="induction">
    <text evidence="3 4 5">By stress conditions; heat shock, ultraviolet and oxidative stress (PubMed:1670771). Induced by hyperosmotic stress (0.5 M sorbitol) under control of hik34 and rre1 (PubMed:15471853). Induced by salt stress (0.5 M NaCl) under control of hik34 and rre1 (PubMed:15805106).</text>
</comment>
<comment type="similarity">
    <text evidence="7">Belongs to the heat shock protein 70 family.</text>
</comment>
<organism>
    <name type="scientific">Synechocystis sp. (strain ATCC 27184 / PCC 6803 / Kazusa)</name>
    <dbReference type="NCBI Taxonomy" id="1111708"/>
    <lineage>
        <taxon>Bacteria</taxon>
        <taxon>Bacillati</taxon>
        <taxon>Cyanobacteriota</taxon>
        <taxon>Cyanophyceae</taxon>
        <taxon>Synechococcales</taxon>
        <taxon>Merismopediaceae</taxon>
        <taxon>Synechocystis</taxon>
    </lineage>
</organism>
<keyword id="KW-0067">ATP-binding</keyword>
<keyword id="KW-0143">Chaperone</keyword>
<keyword id="KW-0547">Nucleotide-binding</keyword>
<keyword id="KW-0597">Phosphoprotein</keyword>
<keyword id="KW-1185">Reference proteome</keyword>
<keyword id="KW-0346">Stress response</keyword>
<protein>
    <recommendedName>
        <fullName>Chaperone protein DnaK2</fullName>
    </recommendedName>
    <alternativeName>
        <fullName>HSP70-2</fullName>
    </alternativeName>
    <alternativeName>
        <fullName>Heat shock 70 kDa protein 2</fullName>
    </alternativeName>
    <alternativeName>
        <fullName>Heat shock protein 70-2</fullName>
    </alternativeName>
</protein>
<name>DNAK2_SYNY3</name>
<proteinExistence type="evidence at transcript level"/>
<feature type="chain" id="PRO_0000078569" description="Chaperone protein DnaK2">
    <location>
        <begin position="1"/>
        <end position="636"/>
    </location>
</feature>
<feature type="region of interest" description="Disordered" evidence="2">
    <location>
        <begin position="604"/>
        <end position="636"/>
    </location>
</feature>
<feature type="compositionally biased region" description="Low complexity" evidence="2">
    <location>
        <begin position="604"/>
        <end position="618"/>
    </location>
</feature>
<feature type="compositionally biased region" description="Acidic residues" evidence="2">
    <location>
        <begin position="625"/>
        <end position="636"/>
    </location>
</feature>
<feature type="modified residue" description="Phosphothreonine; by autocatalysis" evidence="1">
    <location>
        <position position="198"/>
    </location>
</feature>
<reference key="1">
    <citation type="journal article" date="1991" name="J. Biol. Chem.">
        <title>Molecular cloning of the genes encoding two chaperone proteins of the cyanobacterium Synechocystis sp. PCC 6803.</title>
        <authorList>
            <person name="Chitnis P.R."/>
            <person name="Nelson N."/>
        </authorList>
    </citation>
    <scope>NUCLEOTIDE SEQUENCE [GENOMIC DNA]</scope>
    <scope>INDUCTION BY STRESS</scope>
    <source>
        <strain>ATCC 27184 / PCC 6803 / N-1</strain>
    </source>
</reference>
<reference key="2">
    <citation type="journal article" date="1995" name="DNA Res.">
        <title>Sequence analysis of the genome of the unicellular cyanobacterium Synechocystis sp. strain PCC6803. I. Sequence features in the 1 Mb region from map positions 64% to 92% of the genome.</title>
        <authorList>
            <person name="Kaneko T."/>
            <person name="Tanaka A."/>
            <person name="Sato S."/>
            <person name="Kotani H."/>
            <person name="Sazuka T."/>
            <person name="Miyajima N."/>
            <person name="Sugiura M."/>
            <person name="Tabata S."/>
        </authorList>
    </citation>
    <scope>NUCLEOTIDE SEQUENCE [LARGE SCALE GENOMIC DNA]</scope>
    <source>
        <strain>ATCC 27184 / PCC 6803 / N-1</strain>
    </source>
</reference>
<reference key="3">
    <citation type="journal article" date="1996" name="DNA Res.">
        <title>Sequence analysis of the genome of the unicellular cyanobacterium Synechocystis sp. strain PCC6803. II. Sequence determination of the entire genome and assignment of potential protein-coding regions.</title>
        <authorList>
            <person name="Kaneko T."/>
            <person name="Sato S."/>
            <person name="Kotani H."/>
            <person name="Tanaka A."/>
            <person name="Asamizu E."/>
            <person name="Nakamura Y."/>
            <person name="Miyajima N."/>
            <person name="Hirosawa M."/>
            <person name="Sugiura M."/>
            <person name="Sasamoto S."/>
            <person name="Kimura T."/>
            <person name="Hosouchi T."/>
            <person name="Matsuno A."/>
            <person name="Muraki A."/>
            <person name="Nakazaki N."/>
            <person name="Naruo K."/>
            <person name="Okumura S."/>
            <person name="Shimpo S."/>
            <person name="Takeuchi C."/>
            <person name="Wada T."/>
            <person name="Watanabe A."/>
            <person name="Yamada M."/>
            <person name="Yasuda M."/>
            <person name="Tabata S."/>
        </authorList>
    </citation>
    <scope>NUCLEOTIDE SEQUENCE [LARGE SCALE GENOMIC DNA]</scope>
    <source>
        <strain>ATCC 27184 / PCC 6803 / Kazusa</strain>
    </source>
</reference>
<reference key="4">
    <citation type="journal article" date="2004" name="J. Biol. Chem.">
        <title>Five histidine kinases perceive osmotic stress and regulate distinct sets of genes in Synechocystis.</title>
        <authorList>
            <person name="Paithoonrangsarid K."/>
            <person name="Shoumskaya M.A."/>
            <person name="Kanesaki Y."/>
            <person name="Satoh S."/>
            <person name="Tabata S."/>
            <person name="Los D.A."/>
            <person name="Zinchenko V.V."/>
            <person name="Hayashi H."/>
            <person name="Tanticharoen M."/>
            <person name="Suzuki I."/>
            <person name="Murata N."/>
        </authorList>
    </citation>
    <scope>INDUCTION</scope>
    <source>
        <strain>ATCC 27184 / PCC 6803 / Kazusa</strain>
    </source>
</reference>
<reference key="5">
    <citation type="journal article" date="2005" name="J. Biol. Chem.">
        <title>Identical Hik-Rre systems are involved in perception and transduction of salt signals and hyperosmotic signals but regulate the expression of individual genes to different extents in synechocystis.</title>
        <authorList>
            <person name="Shoumskaya M.A."/>
            <person name="Paithoonrangsarid K."/>
            <person name="Kanesaki Y."/>
            <person name="Los D.A."/>
            <person name="Zinchenko V.V."/>
            <person name="Tanticharoen M."/>
            <person name="Suzuki I."/>
            <person name="Murata N."/>
        </authorList>
    </citation>
    <scope>INDUCTION</scope>
    <source>
        <strain>ATCC 27184 / PCC 6803 / Kazusa</strain>
    </source>
</reference>